<name>NSF_MOUSE</name>
<dbReference type="EC" id="3.6.4.6"/>
<dbReference type="EMBL" id="U10120">
    <property type="protein sequence ID" value="AAA50498.1"/>
    <property type="molecule type" value="mRNA"/>
</dbReference>
<dbReference type="EMBL" id="AK028415">
    <property type="protein sequence ID" value="BAC25937.1"/>
    <property type="molecule type" value="mRNA"/>
</dbReference>
<dbReference type="EMBL" id="AK032120">
    <property type="protein sequence ID" value="BAC27713.1"/>
    <property type="molecule type" value="mRNA"/>
</dbReference>
<dbReference type="EMBL" id="AK049281">
    <property type="protein sequence ID" value="BAC33656.1"/>
    <property type="molecule type" value="mRNA"/>
</dbReference>
<dbReference type="EMBL" id="AK051430">
    <property type="protein sequence ID" value="BAC34637.1"/>
    <property type="molecule type" value="mRNA"/>
</dbReference>
<dbReference type="EMBL" id="AK085086">
    <property type="protein sequence ID" value="BAC39361.1"/>
    <property type="molecule type" value="mRNA"/>
</dbReference>
<dbReference type="EMBL" id="AK153905">
    <property type="protein sequence ID" value="BAE32247.1"/>
    <property type="molecule type" value="mRNA"/>
</dbReference>
<dbReference type="EMBL" id="AL596108">
    <property type="protein sequence ID" value="CAM20943.1"/>
    <property type="status" value="ALT_SEQ"/>
    <property type="molecule type" value="Genomic_DNA"/>
</dbReference>
<dbReference type="EMBL" id="AL603829">
    <property type="protein sequence ID" value="CAM20943.1"/>
    <property type="status" value="JOINED"/>
    <property type="molecule type" value="Genomic_DNA"/>
</dbReference>
<dbReference type="EMBL" id="AL596108">
    <property type="protein sequence ID" value="CAM20945.1"/>
    <property type="molecule type" value="Genomic_DNA"/>
</dbReference>
<dbReference type="EMBL" id="AL603829">
    <property type="protein sequence ID" value="CAM20945.1"/>
    <property type="status" value="JOINED"/>
    <property type="molecule type" value="Genomic_DNA"/>
</dbReference>
<dbReference type="EMBL" id="AL603829">
    <property type="protein sequence ID" value="CAM23742.1"/>
    <property type="status" value="ALT_SEQ"/>
    <property type="molecule type" value="Genomic_DNA"/>
</dbReference>
<dbReference type="EMBL" id="AL596108">
    <property type="protein sequence ID" value="CAM23742.1"/>
    <property type="status" value="JOINED"/>
    <property type="molecule type" value="Genomic_DNA"/>
</dbReference>
<dbReference type="EMBL" id="AL603829">
    <property type="protein sequence ID" value="CAM23743.1"/>
    <property type="molecule type" value="Genomic_DNA"/>
</dbReference>
<dbReference type="EMBL" id="AL596108">
    <property type="protein sequence ID" value="CAM23743.1"/>
    <property type="status" value="JOINED"/>
    <property type="molecule type" value="Genomic_DNA"/>
</dbReference>
<dbReference type="EMBL" id="BC006627">
    <property type="protein sequence ID" value="AAH06627.1"/>
    <property type="molecule type" value="mRNA"/>
</dbReference>
<dbReference type="EMBL" id="BC019167">
    <property type="protein sequence ID" value="AAH19167.1"/>
    <property type="molecule type" value="mRNA"/>
</dbReference>
<dbReference type="CCDS" id="CCDS25524.1"/>
<dbReference type="RefSeq" id="NP_032766.2">
    <property type="nucleotide sequence ID" value="NM_008740.4"/>
</dbReference>
<dbReference type="SMR" id="P46460"/>
<dbReference type="BioGRID" id="201857">
    <property type="interactions" value="51"/>
</dbReference>
<dbReference type="CORUM" id="P46460"/>
<dbReference type="FunCoup" id="P46460">
    <property type="interactions" value="1397"/>
</dbReference>
<dbReference type="IntAct" id="P46460">
    <property type="interactions" value="25"/>
</dbReference>
<dbReference type="MINT" id="P46460"/>
<dbReference type="STRING" id="10090.ENSMUSP00000099364"/>
<dbReference type="GlyGen" id="P46460">
    <property type="glycosylation" value="2 sites, 1 N-linked glycan (1 site), 1 O-linked glycan (1 site)"/>
</dbReference>
<dbReference type="iPTMnet" id="P46460"/>
<dbReference type="MetOSite" id="P46460"/>
<dbReference type="PhosphoSitePlus" id="P46460"/>
<dbReference type="SwissPalm" id="P46460"/>
<dbReference type="REPRODUCTION-2DPAGE" id="P46460"/>
<dbReference type="jPOST" id="P46460"/>
<dbReference type="PaxDb" id="10090-ENSMUSP00000099364"/>
<dbReference type="PeptideAtlas" id="P46460"/>
<dbReference type="ProteomicsDB" id="295530"/>
<dbReference type="Pumba" id="P46460"/>
<dbReference type="Antibodypedia" id="1006">
    <property type="antibodies" value="282 antibodies from 36 providers"/>
</dbReference>
<dbReference type="DNASU" id="18195"/>
<dbReference type="Ensembl" id="ENSMUST00000103075.11">
    <property type="protein sequence ID" value="ENSMUSP00000099364.5"/>
    <property type="gene ID" value="ENSMUSG00000034187.19"/>
</dbReference>
<dbReference type="GeneID" id="18195"/>
<dbReference type="KEGG" id="mmu:18195"/>
<dbReference type="UCSC" id="uc007lvt.1">
    <property type="organism name" value="mouse"/>
</dbReference>
<dbReference type="AGR" id="MGI:104560"/>
<dbReference type="CTD" id="4905"/>
<dbReference type="MGI" id="MGI:104560">
    <property type="gene designation" value="Nsf"/>
</dbReference>
<dbReference type="VEuPathDB" id="HostDB:ENSMUSG00000034187"/>
<dbReference type="eggNOG" id="KOG0741">
    <property type="taxonomic scope" value="Eukaryota"/>
</dbReference>
<dbReference type="GeneTree" id="ENSGT00530000064085"/>
<dbReference type="HOGENOM" id="CLU_008037_2_0_1"/>
<dbReference type="InParanoid" id="P46460"/>
<dbReference type="OMA" id="CFDNEIA"/>
<dbReference type="OrthoDB" id="9982946at2759"/>
<dbReference type="PhylomeDB" id="P46460"/>
<dbReference type="TreeFam" id="TF300371"/>
<dbReference type="Reactome" id="R-MMU-204005">
    <property type="pathway name" value="COPII-mediated vesicle transport"/>
</dbReference>
<dbReference type="Reactome" id="R-MMU-416993">
    <property type="pathway name" value="Trafficking of GluR2-containing AMPA receptors"/>
</dbReference>
<dbReference type="Reactome" id="R-MMU-6807878">
    <property type="pathway name" value="COPI-mediated anterograde transport"/>
</dbReference>
<dbReference type="Reactome" id="R-MMU-6811434">
    <property type="pathway name" value="COPI-dependent Golgi-to-ER retrograde traffic"/>
</dbReference>
<dbReference type="Reactome" id="R-MMU-6811438">
    <property type="pathway name" value="Intra-Golgi traffic"/>
</dbReference>
<dbReference type="Reactome" id="R-MMU-6811440">
    <property type="pathway name" value="Retrograde transport at the Trans-Golgi-Network"/>
</dbReference>
<dbReference type="BioGRID-ORCS" id="18195">
    <property type="hits" value="29 hits in 83 CRISPR screens"/>
</dbReference>
<dbReference type="CD-CODE" id="CE726F99">
    <property type="entry name" value="Postsynaptic density"/>
</dbReference>
<dbReference type="ChiTaRS" id="Nsf">
    <property type="organism name" value="mouse"/>
</dbReference>
<dbReference type="PRO" id="PR:P46460"/>
<dbReference type="Proteomes" id="UP000000589">
    <property type="component" value="Chromosome 11"/>
</dbReference>
<dbReference type="RNAct" id="P46460">
    <property type="molecule type" value="protein"/>
</dbReference>
<dbReference type="Bgee" id="ENSMUSG00000034187">
    <property type="expression patterns" value="Expressed in dentate gyrus of hippocampal formation granule cell and 261 other cell types or tissues"/>
</dbReference>
<dbReference type="ExpressionAtlas" id="P46460">
    <property type="expression patterns" value="baseline and differential"/>
</dbReference>
<dbReference type="GO" id="GO:0005829">
    <property type="term" value="C:cytosol"/>
    <property type="evidence" value="ECO:0007669"/>
    <property type="project" value="Ensembl"/>
</dbReference>
<dbReference type="GO" id="GO:0005794">
    <property type="term" value="C:Golgi apparatus"/>
    <property type="evidence" value="ECO:0007669"/>
    <property type="project" value="Ensembl"/>
</dbReference>
<dbReference type="GO" id="GO:0043209">
    <property type="term" value="C:myelin sheath"/>
    <property type="evidence" value="ECO:0007005"/>
    <property type="project" value="UniProtKB"/>
</dbReference>
<dbReference type="GO" id="GO:0005886">
    <property type="term" value="C:plasma membrane"/>
    <property type="evidence" value="ECO:0007669"/>
    <property type="project" value="Ensembl"/>
</dbReference>
<dbReference type="GO" id="GO:0005524">
    <property type="term" value="F:ATP binding"/>
    <property type="evidence" value="ECO:0007669"/>
    <property type="project" value="UniProtKB-KW"/>
</dbReference>
<dbReference type="GO" id="GO:0016887">
    <property type="term" value="F:ATP hydrolysis activity"/>
    <property type="evidence" value="ECO:0000315"/>
    <property type="project" value="MGI"/>
</dbReference>
<dbReference type="GO" id="GO:0140545">
    <property type="term" value="F:ATP-dependent protein disaggregase activity"/>
    <property type="evidence" value="ECO:0000250"/>
    <property type="project" value="ParkinsonsUK-UCL"/>
</dbReference>
<dbReference type="GO" id="GO:0035255">
    <property type="term" value="F:ionotropic glutamate receptor binding"/>
    <property type="evidence" value="ECO:0007669"/>
    <property type="project" value="Ensembl"/>
</dbReference>
<dbReference type="GO" id="GO:0046872">
    <property type="term" value="F:metal ion binding"/>
    <property type="evidence" value="ECO:0007669"/>
    <property type="project" value="UniProtKB-KW"/>
</dbReference>
<dbReference type="GO" id="GO:0030165">
    <property type="term" value="F:PDZ domain binding"/>
    <property type="evidence" value="ECO:0007669"/>
    <property type="project" value="Ensembl"/>
</dbReference>
<dbReference type="GO" id="GO:0019901">
    <property type="term" value="F:protein kinase binding"/>
    <property type="evidence" value="ECO:0000353"/>
    <property type="project" value="ParkinsonsUK-UCL"/>
</dbReference>
<dbReference type="GO" id="GO:0044877">
    <property type="term" value="F:protein-containing complex binding"/>
    <property type="evidence" value="ECO:0000250"/>
    <property type="project" value="ParkinsonsUK-UCL"/>
</dbReference>
<dbReference type="GO" id="GO:0000149">
    <property type="term" value="F:SNARE binding"/>
    <property type="evidence" value="ECO:0000250"/>
    <property type="project" value="ParkinsonsUK-UCL"/>
</dbReference>
<dbReference type="GO" id="GO:0019905">
    <property type="term" value="F:syntaxin binding"/>
    <property type="evidence" value="ECO:0000314"/>
    <property type="project" value="MGI"/>
</dbReference>
<dbReference type="GO" id="GO:0017075">
    <property type="term" value="F:syntaxin-1 binding"/>
    <property type="evidence" value="ECO:0000314"/>
    <property type="project" value="ParkinsonsUK-UCL"/>
</dbReference>
<dbReference type="GO" id="GO:0006886">
    <property type="term" value="P:intracellular protein transport"/>
    <property type="evidence" value="ECO:0007669"/>
    <property type="project" value="Ensembl"/>
</dbReference>
<dbReference type="GO" id="GO:0045732">
    <property type="term" value="P:positive regulation of protein catabolic process"/>
    <property type="evidence" value="ECO:0007669"/>
    <property type="project" value="Ensembl"/>
</dbReference>
<dbReference type="GO" id="GO:0001921">
    <property type="term" value="P:positive regulation of receptor recycling"/>
    <property type="evidence" value="ECO:0007669"/>
    <property type="project" value="Ensembl"/>
</dbReference>
<dbReference type="GO" id="GO:0006813">
    <property type="term" value="P:potassium ion transport"/>
    <property type="evidence" value="ECO:0000314"/>
    <property type="project" value="MGI"/>
</dbReference>
<dbReference type="GO" id="GO:0035494">
    <property type="term" value="P:SNARE complex disassembly"/>
    <property type="evidence" value="ECO:0000250"/>
    <property type="project" value="ParkinsonsUK-UCL"/>
</dbReference>
<dbReference type="CDD" id="cd19504">
    <property type="entry name" value="RecA-like_NSF-SEC18_r1-like"/>
    <property type="match status" value="1"/>
</dbReference>
<dbReference type="FunFam" id="1.10.8.60:FF:000026">
    <property type="entry name" value="vesicle-fusing ATPase isoform X1"/>
    <property type="match status" value="1"/>
</dbReference>
<dbReference type="FunFam" id="1.10.8.60:FF:000031">
    <property type="entry name" value="vesicle-fusing ATPase isoform X1"/>
    <property type="match status" value="1"/>
</dbReference>
<dbReference type="FunFam" id="2.40.40.20:FF:000006">
    <property type="entry name" value="vesicle-fusing ATPase isoform X1"/>
    <property type="match status" value="1"/>
</dbReference>
<dbReference type="FunFam" id="3.10.330.10:FF:000003">
    <property type="entry name" value="vesicle-fusing ATPase isoform X1"/>
    <property type="match status" value="1"/>
</dbReference>
<dbReference type="FunFam" id="3.40.50.300:FF:000166">
    <property type="entry name" value="vesicle-fusing ATPase isoform X1"/>
    <property type="match status" value="1"/>
</dbReference>
<dbReference type="FunFam" id="3.40.50.300:FF:000187">
    <property type="entry name" value="Vesicular-fusion ATPase SEC18"/>
    <property type="match status" value="1"/>
</dbReference>
<dbReference type="Gene3D" id="1.10.8.60">
    <property type="match status" value="2"/>
</dbReference>
<dbReference type="Gene3D" id="2.40.40.20">
    <property type="match status" value="1"/>
</dbReference>
<dbReference type="Gene3D" id="3.10.330.10">
    <property type="match status" value="1"/>
</dbReference>
<dbReference type="Gene3D" id="3.40.50.300">
    <property type="entry name" value="P-loop containing nucleotide triphosphate hydrolases"/>
    <property type="match status" value="2"/>
</dbReference>
<dbReference type="InterPro" id="IPR003593">
    <property type="entry name" value="AAA+_ATPase"/>
</dbReference>
<dbReference type="InterPro" id="IPR041569">
    <property type="entry name" value="AAA_lid_3"/>
</dbReference>
<dbReference type="InterPro" id="IPR009010">
    <property type="entry name" value="Asp_de-COase-like_dom_sf"/>
</dbReference>
<dbReference type="InterPro" id="IPR003959">
    <property type="entry name" value="ATPase_AAA_core"/>
</dbReference>
<dbReference type="InterPro" id="IPR003960">
    <property type="entry name" value="ATPase_AAA_CS"/>
</dbReference>
<dbReference type="InterPro" id="IPR004201">
    <property type="entry name" value="Cdc48_dom2"/>
</dbReference>
<dbReference type="InterPro" id="IPR029067">
    <property type="entry name" value="CDC48_domain_2-like_sf"/>
</dbReference>
<dbReference type="InterPro" id="IPR003338">
    <property type="entry name" value="CDC4_N-term_subdom"/>
</dbReference>
<dbReference type="InterPro" id="IPR054419">
    <property type="entry name" value="NSF_ATPase_lid"/>
</dbReference>
<dbReference type="InterPro" id="IPR027417">
    <property type="entry name" value="P-loop_NTPase"/>
</dbReference>
<dbReference type="InterPro" id="IPR039812">
    <property type="entry name" value="Vesicle-fus_ATPase"/>
</dbReference>
<dbReference type="PANTHER" id="PTHR23078:SF3">
    <property type="entry name" value="VESICLE-FUSING ATPASE"/>
    <property type="match status" value="1"/>
</dbReference>
<dbReference type="PANTHER" id="PTHR23078">
    <property type="entry name" value="VESICULAR-FUSION PROTEIN NSF"/>
    <property type="match status" value="1"/>
</dbReference>
<dbReference type="Pfam" id="PF00004">
    <property type="entry name" value="AAA"/>
    <property type="match status" value="2"/>
</dbReference>
<dbReference type="Pfam" id="PF17862">
    <property type="entry name" value="AAA_lid_3"/>
    <property type="match status" value="1"/>
</dbReference>
<dbReference type="Pfam" id="PF02933">
    <property type="entry name" value="CDC48_2"/>
    <property type="match status" value="1"/>
</dbReference>
<dbReference type="Pfam" id="PF02359">
    <property type="entry name" value="CDC48_N"/>
    <property type="match status" value="1"/>
</dbReference>
<dbReference type="Pfam" id="PF21964">
    <property type="entry name" value="NSF_ATPase_lid"/>
    <property type="match status" value="1"/>
</dbReference>
<dbReference type="PRINTS" id="PR00830">
    <property type="entry name" value="ENDOLAPTASE"/>
</dbReference>
<dbReference type="SMART" id="SM00382">
    <property type="entry name" value="AAA"/>
    <property type="match status" value="2"/>
</dbReference>
<dbReference type="SMART" id="SM01072">
    <property type="entry name" value="CDC48_2"/>
    <property type="match status" value="1"/>
</dbReference>
<dbReference type="SMART" id="SM01073">
    <property type="entry name" value="CDC48_N"/>
    <property type="match status" value="1"/>
</dbReference>
<dbReference type="SUPFAM" id="SSF50692">
    <property type="entry name" value="ADC-like"/>
    <property type="match status" value="1"/>
</dbReference>
<dbReference type="SUPFAM" id="SSF54585">
    <property type="entry name" value="Cdc48 domain 2-like"/>
    <property type="match status" value="1"/>
</dbReference>
<dbReference type="SUPFAM" id="SSF52540">
    <property type="entry name" value="P-loop containing nucleoside triphosphate hydrolases"/>
    <property type="match status" value="2"/>
</dbReference>
<dbReference type="PROSITE" id="PS00674">
    <property type="entry name" value="AAA"/>
    <property type="match status" value="1"/>
</dbReference>
<protein>
    <recommendedName>
        <fullName>Vesicle-fusing ATPase</fullName>
        <ecNumber>3.6.4.6</ecNumber>
    </recommendedName>
    <alternativeName>
        <fullName>N-ethylmaleimide-sensitive fusion protein</fullName>
        <shortName>NEM-sensitive fusion protein</shortName>
    </alternativeName>
    <alternativeName>
        <fullName>Suppressor of K(+) transport growth defect 2</fullName>
        <shortName>Protein SKD2</shortName>
    </alternativeName>
    <alternativeName>
        <fullName>Vesicular-fusion protein NSF</fullName>
    </alternativeName>
</protein>
<comment type="function">
    <text evidence="1 3">Required for vesicle-mediated transport. Catalyzes the fusion of transport vesicles within the Golgi cisternae. Is also required for transport from the endoplasmic reticulum to the Golgi stack. Seems to function as a fusion protein required for the delivery of cargo proteins to all compartments of the Golgi stack GRIA2 leads to influence GRIA2 membrane cycling (By similarity).</text>
</comment>
<comment type="catalytic activity">
    <reaction>
        <text>ATP + H2O = ADP + phosphate + H(+)</text>
        <dbReference type="Rhea" id="RHEA:13065"/>
        <dbReference type="ChEBI" id="CHEBI:15377"/>
        <dbReference type="ChEBI" id="CHEBI:15378"/>
        <dbReference type="ChEBI" id="CHEBI:30616"/>
        <dbReference type="ChEBI" id="CHEBI:43474"/>
        <dbReference type="ChEBI" id="CHEBI:456216"/>
        <dbReference type="EC" id="3.6.4.6"/>
    </reaction>
</comment>
<comment type="cofactor">
    <cofactor evidence="2">
        <name>Mg(2+)</name>
        <dbReference type="ChEBI" id="CHEBI:18420"/>
    </cofactor>
    <text evidence="2">Binds 1 Mg(2+) ion per subunit.</text>
</comment>
<comment type="subunit">
    <text evidence="1 3 4">Homohexamer. Interacts with GABARAP and GABARAPL2. Interacts with GRIA2. Interacts with PLK2, leading to disrupt the interaction with GRIA2. Interacts with MUSK; may regulate MUSK endocytosis and activity (By similarity). Interacts with CDK16.</text>
</comment>
<comment type="interaction">
    <interactant intactId="EBI-398006">
        <id>P46460</id>
    </interactant>
    <interactant intactId="EBI-300895">
        <id>Q62108</id>
        <label>Dlg4</label>
    </interactant>
    <organismsDiffer>false</organismsDiffer>
    <experiments>5</experiments>
</comment>
<comment type="interaction">
    <interactant intactId="EBI-398006">
        <id>P46460</id>
    </interactant>
    <interactant intactId="EBI-2693710">
        <id>Q5S006</id>
        <label>Lrrk2</label>
    </interactant>
    <organismsDiffer>false</organismsDiffer>
    <experiments>3</experiments>
</comment>
<comment type="interaction">
    <interactant intactId="EBI-398006">
        <id>P46460</id>
    </interactant>
    <interactant intactId="EBI-6308424">
        <id>Q61006-3</id>
        <label>Musk</label>
    </interactant>
    <organismsDiffer>false</organismsDiffer>
    <experiments>5</experiments>
</comment>
<comment type="interaction">
    <interactant intactId="EBI-398006">
        <id>P46460</id>
    </interactant>
    <interactant intactId="EBI-7297868">
        <id>O35239</id>
        <label>Ptpn9</label>
    </interactant>
    <organismsDiffer>false</organismsDiffer>
    <experiments>2</experiments>
</comment>
<comment type="subcellular location">
    <subcellularLocation>
        <location>Cytoplasm</location>
    </subcellularLocation>
</comment>
<comment type="PTM">
    <text evidence="3">Phosphorylation at Ser-569 interferes with homohexamerization.</text>
</comment>
<comment type="similarity">
    <text evidence="5">Belongs to the AAA ATPase family.</text>
</comment>
<comment type="sequence caution" evidence="5">
    <conflict type="erroneous gene model prediction">
        <sequence resource="EMBL-CDS" id="CAM20943"/>
    </conflict>
</comment>
<comment type="sequence caution" evidence="5">
    <conflict type="erroneous gene model prediction">
        <sequence resource="EMBL-CDS" id="CAM23742"/>
    </conflict>
</comment>
<keyword id="KW-0007">Acetylation</keyword>
<keyword id="KW-0067">ATP-binding</keyword>
<keyword id="KW-0963">Cytoplasm</keyword>
<keyword id="KW-0903">Direct protein sequencing</keyword>
<keyword id="KW-0378">Hydrolase</keyword>
<keyword id="KW-0460">Magnesium</keyword>
<keyword id="KW-0479">Metal-binding</keyword>
<keyword id="KW-0547">Nucleotide-binding</keyword>
<keyword id="KW-0597">Phosphoprotein</keyword>
<keyword id="KW-0653">Protein transport</keyword>
<keyword id="KW-1185">Reference proteome</keyword>
<keyword id="KW-0677">Repeat</keyword>
<keyword id="KW-0813">Transport</keyword>
<organism>
    <name type="scientific">Mus musculus</name>
    <name type="common">Mouse</name>
    <dbReference type="NCBI Taxonomy" id="10090"/>
    <lineage>
        <taxon>Eukaryota</taxon>
        <taxon>Metazoa</taxon>
        <taxon>Chordata</taxon>
        <taxon>Craniata</taxon>
        <taxon>Vertebrata</taxon>
        <taxon>Euteleostomi</taxon>
        <taxon>Mammalia</taxon>
        <taxon>Eutheria</taxon>
        <taxon>Euarchontoglires</taxon>
        <taxon>Glires</taxon>
        <taxon>Rodentia</taxon>
        <taxon>Myomorpha</taxon>
        <taxon>Muroidea</taxon>
        <taxon>Muridae</taxon>
        <taxon>Murinae</taxon>
        <taxon>Mus</taxon>
        <taxon>Mus</taxon>
    </lineage>
</organism>
<gene>
    <name type="primary">Nsf</name>
    <name type="synonym">Skd2</name>
</gene>
<feature type="chain" id="PRO_0000084564" description="Vesicle-fusing ATPase">
    <location>
        <begin position="1"/>
        <end position="744"/>
    </location>
</feature>
<feature type="binding site" evidence="2">
    <location>
        <begin position="505"/>
        <end position="510"/>
    </location>
    <ligand>
        <name>ATP</name>
        <dbReference type="ChEBI" id="CHEBI:30616"/>
    </ligand>
</feature>
<feature type="binding site" evidence="2">
    <location>
        <begin position="545"/>
        <end position="552"/>
    </location>
    <ligand>
        <name>ATP</name>
        <dbReference type="ChEBI" id="CHEBI:30616"/>
    </ligand>
</feature>
<feature type="binding site" evidence="2">
    <location>
        <position position="550"/>
    </location>
    <ligand>
        <name>Mg(2+)</name>
        <dbReference type="ChEBI" id="CHEBI:18420"/>
    </ligand>
</feature>
<feature type="modified residue" description="N6-acetyllysine" evidence="8">
    <location>
        <position position="105"/>
    </location>
</feature>
<feature type="modified residue" description="Phosphoserine" evidence="7">
    <location>
        <position position="207"/>
    </location>
</feature>
<feature type="modified residue" description="Phosphotyrosine" evidence="6">
    <location>
        <position position="259"/>
    </location>
</feature>
<feature type="modified residue" description="Phosphoserine; by CDK16" evidence="3">
    <location>
        <position position="569"/>
    </location>
</feature>
<feature type="mutagenesis site" description="Abolishes phosphorylation by CDK16." evidence="3">
    <original>S</original>
    <variation>A</variation>
    <location>
        <position position="569"/>
    </location>
</feature>
<feature type="mutagenesis site" description="Interferes with oligomerization." evidence="3">
    <original>S</original>
    <variation>E</variation>
    <location>
        <position position="569"/>
    </location>
</feature>
<feature type="sequence conflict" description="In Ref. 2; BAC39361." evidence="5" ref="2">
    <original>A</original>
    <variation>G</variation>
    <location>
        <position position="300"/>
    </location>
</feature>
<feature type="sequence conflict" description="In Ref. 2; BAC34637." evidence="5" ref="2">
    <original>LGANSGLHIII</original>
    <variation>VCGHKTNLLKM</variation>
    <location>
        <begin position="316"/>
        <end position="326"/>
    </location>
</feature>
<feature type="sequence conflict" description="In Ref. 1; AAA50498." evidence="5" ref="1">
    <original>F</original>
    <variation>I</variation>
    <location>
        <position position="492"/>
    </location>
</feature>
<feature type="sequence conflict" description="In Ref. 1; AAA50498." evidence="5" ref="1">
    <original>L</original>
    <variation>V</variation>
    <location>
        <position position="552"/>
    </location>
</feature>
<feature type="sequence conflict" description="In Ref. 2; BAC25937." evidence="5" ref="2">
    <original>M</original>
    <variation>I</variation>
    <location>
        <position position="657"/>
    </location>
</feature>
<reference key="1">
    <citation type="journal article" date="1994" name="FEBS Lett.">
        <title>Identification of a novel mammalian member of the NSF/CDC48p/Pas1p/TBP-1 family through heterologous expression in yeast.</title>
        <authorList>
            <person name="Perier F."/>
            <person name="Coulter K.L."/>
            <person name="Liang H."/>
            <person name="Radeke C.M."/>
            <person name="Gaber R.F."/>
            <person name="Vandenberg C.A."/>
        </authorList>
    </citation>
    <scope>NUCLEOTIDE SEQUENCE [MRNA]</scope>
    <source>
        <strain>BALB/cJ</strain>
    </source>
</reference>
<reference key="2">
    <citation type="journal article" date="2005" name="Science">
        <title>The transcriptional landscape of the mammalian genome.</title>
        <authorList>
            <person name="Carninci P."/>
            <person name="Kasukawa T."/>
            <person name="Katayama S."/>
            <person name="Gough J."/>
            <person name="Frith M.C."/>
            <person name="Maeda N."/>
            <person name="Oyama R."/>
            <person name="Ravasi T."/>
            <person name="Lenhard B."/>
            <person name="Wells C."/>
            <person name="Kodzius R."/>
            <person name="Shimokawa K."/>
            <person name="Bajic V.B."/>
            <person name="Brenner S.E."/>
            <person name="Batalov S."/>
            <person name="Forrest A.R."/>
            <person name="Zavolan M."/>
            <person name="Davis M.J."/>
            <person name="Wilming L.G."/>
            <person name="Aidinis V."/>
            <person name="Allen J.E."/>
            <person name="Ambesi-Impiombato A."/>
            <person name="Apweiler R."/>
            <person name="Aturaliya R.N."/>
            <person name="Bailey T.L."/>
            <person name="Bansal M."/>
            <person name="Baxter L."/>
            <person name="Beisel K.W."/>
            <person name="Bersano T."/>
            <person name="Bono H."/>
            <person name="Chalk A.M."/>
            <person name="Chiu K.P."/>
            <person name="Choudhary V."/>
            <person name="Christoffels A."/>
            <person name="Clutterbuck D.R."/>
            <person name="Crowe M.L."/>
            <person name="Dalla E."/>
            <person name="Dalrymple B.P."/>
            <person name="de Bono B."/>
            <person name="Della Gatta G."/>
            <person name="di Bernardo D."/>
            <person name="Down T."/>
            <person name="Engstrom P."/>
            <person name="Fagiolini M."/>
            <person name="Faulkner G."/>
            <person name="Fletcher C.F."/>
            <person name="Fukushima T."/>
            <person name="Furuno M."/>
            <person name="Futaki S."/>
            <person name="Gariboldi M."/>
            <person name="Georgii-Hemming P."/>
            <person name="Gingeras T.R."/>
            <person name="Gojobori T."/>
            <person name="Green R.E."/>
            <person name="Gustincich S."/>
            <person name="Harbers M."/>
            <person name="Hayashi Y."/>
            <person name="Hensch T.K."/>
            <person name="Hirokawa N."/>
            <person name="Hill D."/>
            <person name="Huminiecki L."/>
            <person name="Iacono M."/>
            <person name="Ikeo K."/>
            <person name="Iwama A."/>
            <person name="Ishikawa T."/>
            <person name="Jakt M."/>
            <person name="Kanapin A."/>
            <person name="Katoh M."/>
            <person name="Kawasawa Y."/>
            <person name="Kelso J."/>
            <person name="Kitamura H."/>
            <person name="Kitano H."/>
            <person name="Kollias G."/>
            <person name="Krishnan S.P."/>
            <person name="Kruger A."/>
            <person name="Kummerfeld S.K."/>
            <person name="Kurochkin I.V."/>
            <person name="Lareau L.F."/>
            <person name="Lazarevic D."/>
            <person name="Lipovich L."/>
            <person name="Liu J."/>
            <person name="Liuni S."/>
            <person name="McWilliam S."/>
            <person name="Madan Babu M."/>
            <person name="Madera M."/>
            <person name="Marchionni L."/>
            <person name="Matsuda H."/>
            <person name="Matsuzawa S."/>
            <person name="Miki H."/>
            <person name="Mignone F."/>
            <person name="Miyake S."/>
            <person name="Morris K."/>
            <person name="Mottagui-Tabar S."/>
            <person name="Mulder N."/>
            <person name="Nakano N."/>
            <person name="Nakauchi H."/>
            <person name="Ng P."/>
            <person name="Nilsson R."/>
            <person name="Nishiguchi S."/>
            <person name="Nishikawa S."/>
            <person name="Nori F."/>
            <person name="Ohara O."/>
            <person name="Okazaki Y."/>
            <person name="Orlando V."/>
            <person name="Pang K.C."/>
            <person name="Pavan W.J."/>
            <person name="Pavesi G."/>
            <person name="Pesole G."/>
            <person name="Petrovsky N."/>
            <person name="Piazza S."/>
            <person name="Reed J."/>
            <person name="Reid J.F."/>
            <person name="Ring B.Z."/>
            <person name="Ringwald M."/>
            <person name="Rost B."/>
            <person name="Ruan Y."/>
            <person name="Salzberg S.L."/>
            <person name="Sandelin A."/>
            <person name="Schneider C."/>
            <person name="Schoenbach C."/>
            <person name="Sekiguchi K."/>
            <person name="Semple C.A."/>
            <person name="Seno S."/>
            <person name="Sessa L."/>
            <person name="Sheng Y."/>
            <person name="Shibata Y."/>
            <person name="Shimada H."/>
            <person name="Shimada K."/>
            <person name="Silva D."/>
            <person name="Sinclair B."/>
            <person name="Sperling S."/>
            <person name="Stupka E."/>
            <person name="Sugiura K."/>
            <person name="Sultana R."/>
            <person name="Takenaka Y."/>
            <person name="Taki K."/>
            <person name="Tammoja K."/>
            <person name="Tan S.L."/>
            <person name="Tang S."/>
            <person name="Taylor M.S."/>
            <person name="Tegner J."/>
            <person name="Teichmann S.A."/>
            <person name="Ueda H.R."/>
            <person name="van Nimwegen E."/>
            <person name="Verardo R."/>
            <person name="Wei C.L."/>
            <person name="Yagi K."/>
            <person name="Yamanishi H."/>
            <person name="Zabarovsky E."/>
            <person name="Zhu S."/>
            <person name="Zimmer A."/>
            <person name="Hide W."/>
            <person name="Bult C."/>
            <person name="Grimmond S.M."/>
            <person name="Teasdale R.D."/>
            <person name="Liu E.T."/>
            <person name="Brusic V."/>
            <person name="Quackenbush J."/>
            <person name="Wahlestedt C."/>
            <person name="Mattick J.S."/>
            <person name="Hume D.A."/>
            <person name="Kai C."/>
            <person name="Sasaki D."/>
            <person name="Tomaru Y."/>
            <person name="Fukuda S."/>
            <person name="Kanamori-Katayama M."/>
            <person name="Suzuki M."/>
            <person name="Aoki J."/>
            <person name="Arakawa T."/>
            <person name="Iida J."/>
            <person name="Imamura K."/>
            <person name="Itoh M."/>
            <person name="Kato T."/>
            <person name="Kawaji H."/>
            <person name="Kawagashira N."/>
            <person name="Kawashima T."/>
            <person name="Kojima M."/>
            <person name="Kondo S."/>
            <person name="Konno H."/>
            <person name="Nakano K."/>
            <person name="Ninomiya N."/>
            <person name="Nishio T."/>
            <person name="Okada M."/>
            <person name="Plessy C."/>
            <person name="Shibata K."/>
            <person name="Shiraki T."/>
            <person name="Suzuki S."/>
            <person name="Tagami M."/>
            <person name="Waki K."/>
            <person name="Watahiki A."/>
            <person name="Okamura-Oho Y."/>
            <person name="Suzuki H."/>
            <person name="Kawai J."/>
            <person name="Hayashizaki Y."/>
        </authorList>
    </citation>
    <scope>NUCLEOTIDE SEQUENCE [LARGE SCALE MRNA]</scope>
    <source>
        <strain>C57BL/6J</strain>
        <strain>NOD</strain>
        <tissue>Head</tissue>
        <tissue>Lung</tissue>
        <tissue>Medulla oblongata</tissue>
        <tissue>Spinal ganglion</tissue>
        <tissue>Thymus</tissue>
    </source>
</reference>
<reference key="3">
    <citation type="journal article" date="2009" name="PLoS Biol.">
        <title>Lineage-specific biology revealed by a finished genome assembly of the mouse.</title>
        <authorList>
            <person name="Church D.M."/>
            <person name="Goodstadt L."/>
            <person name="Hillier L.W."/>
            <person name="Zody M.C."/>
            <person name="Goldstein S."/>
            <person name="She X."/>
            <person name="Bult C.J."/>
            <person name="Agarwala R."/>
            <person name="Cherry J.L."/>
            <person name="DiCuccio M."/>
            <person name="Hlavina W."/>
            <person name="Kapustin Y."/>
            <person name="Meric P."/>
            <person name="Maglott D."/>
            <person name="Birtle Z."/>
            <person name="Marques A.C."/>
            <person name="Graves T."/>
            <person name="Zhou S."/>
            <person name="Teague B."/>
            <person name="Potamousis K."/>
            <person name="Churas C."/>
            <person name="Place M."/>
            <person name="Herschleb J."/>
            <person name="Runnheim R."/>
            <person name="Forrest D."/>
            <person name="Amos-Landgraf J."/>
            <person name="Schwartz D.C."/>
            <person name="Cheng Z."/>
            <person name="Lindblad-Toh K."/>
            <person name="Eichler E.E."/>
            <person name="Ponting C.P."/>
        </authorList>
    </citation>
    <scope>NUCLEOTIDE SEQUENCE [LARGE SCALE GENOMIC DNA]</scope>
    <source>
        <strain>C57BL/6J</strain>
    </source>
</reference>
<reference key="4">
    <citation type="journal article" date="2004" name="Genome Res.">
        <title>The status, quality, and expansion of the NIH full-length cDNA project: the Mammalian Gene Collection (MGC).</title>
        <authorList>
            <consortium name="The MGC Project Team"/>
        </authorList>
    </citation>
    <scope>NUCLEOTIDE SEQUENCE [LARGE SCALE MRNA]</scope>
    <source>
        <strain>FVB/N</strain>
        <tissue>Eye</tissue>
        <tissue>Mammary tumor</tissue>
    </source>
</reference>
<reference key="5">
    <citation type="submission" date="2009-01" db="UniProtKB">
        <authorList>
            <person name="Lubec G."/>
            <person name="Kang S.U."/>
            <person name="Klug S."/>
            <person name="Sunyer B."/>
            <person name="Chen W.-Q."/>
        </authorList>
    </citation>
    <scope>PROTEIN SEQUENCE OF 45-50; 69-87; 106-116; 151-161; 170-198; 218-232; 255-266; 294-303; 305-314; 316-335; 338-357; 404-413; 416-427; 435-446; 517-529; 534-559; 573-581; 595-631; 640-648 AND 710-725</scope>
    <scope>IDENTIFICATION BY MASS SPECTROMETRY</scope>
    <source>
        <strain>C57BL/6J</strain>
        <strain>OF1</strain>
        <tissue>Brain</tissue>
        <tissue>Hippocampus</tissue>
    </source>
</reference>
<reference key="6">
    <citation type="journal article" date="2006" name="J. Biol. Chem.">
        <title>Pctaire1 phosphorylates N-ethylmaleimide-sensitive fusion protein: implications in the regulation of its hexamerization and exocytosis.</title>
        <authorList>
            <person name="Liu Y."/>
            <person name="Cheng K."/>
            <person name="Gong K."/>
            <person name="Fu A.K."/>
            <person name="Ip N.Y."/>
        </authorList>
    </citation>
    <scope>FUNCTION</scope>
    <scope>INTERACTION WITH CDK16</scope>
    <scope>SUBUNIT</scope>
    <scope>MUTAGENESIS OF SER-569</scope>
    <scope>PHOSPHORYLATION AT SER-569</scope>
</reference>
<reference key="7">
    <citation type="journal article" date="2008" name="J. Neurosci.">
        <title>Muscle-specific receptor tyrosine kinase endocytosis in acetylcholine receptor clustering in response to agrin.</title>
        <authorList>
            <person name="Zhu D."/>
            <person name="Yang Z."/>
            <person name="Luo Z."/>
            <person name="Luo S."/>
            <person name="Xiong W.C."/>
            <person name="Mei L."/>
        </authorList>
    </citation>
    <scope>INTERACTION WITH MUSK</scope>
</reference>
<reference key="8">
    <citation type="journal article" date="2008" name="J. Proteome Res.">
        <title>Large-scale identification and evolution indexing of tyrosine phosphorylation sites from murine brain.</title>
        <authorList>
            <person name="Ballif B.A."/>
            <person name="Carey G.R."/>
            <person name="Sunyaev S.R."/>
            <person name="Gygi S.P."/>
        </authorList>
    </citation>
    <scope>PHOSPHORYLATION [LARGE SCALE ANALYSIS] AT TYR-259</scope>
    <scope>IDENTIFICATION BY MASS SPECTROMETRY [LARGE SCALE ANALYSIS]</scope>
    <source>
        <tissue>Brain</tissue>
    </source>
</reference>
<reference key="9">
    <citation type="journal article" date="2010" name="Cell">
        <title>A tissue-specific atlas of mouse protein phosphorylation and expression.</title>
        <authorList>
            <person name="Huttlin E.L."/>
            <person name="Jedrychowski M.P."/>
            <person name="Elias J.E."/>
            <person name="Goswami T."/>
            <person name="Rad R."/>
            <person name="Beausoleil S.A."/>
            <person name="Villen J."/>
            <person name="Haas W."/>
            <person name="Sowa M.E."/>
            <person name="Gygi S.P."/>
        </authorList>
    </citation>
    <scope>PHOSPHORYLATION [LARGE SCALE ANALYSIS] AT SER-207</scope>
    <scope>IDENTIFICATION BY MASS SPECTROMETRY [LARGE SCALE ANALYSIS]</scope>
    <source>
        <tissue>Brain</tissue>
        <tissue>Brown adipose tissue</tissue>
        <tissue>Heart</tissue>
        <tissue>Kidney</tissue>
        <tissue>Liver</tissue>
        <tissue>Lung</tissue>
        <tissue>Pancreas</tissue>
        <tissue>Spleen</tissue>
        <tissue>Testis</tissue>
    </source>
</reference>
<reference key="10">
    <citation type="journal article" date="2013" name="Mol. Cell">
        <title>SIRT5-mediated lysine desuccinylation impacts diverse metabolic pathways.</title>
        <authorList>
            <person name="Park J."/>
            <person name="Chen Y."/>
            <person name="Tishkoff D.X."/>
            <person name="Peng C."/>
            <person name="Tan M."/>
            <person name="Dai L."/>
            <person name="Xie Z."/>
            <person name="Zhang Y."/>
            <person name="Zwaans B.M."/>
            <person name="Skinner M.E."/>
            <person name="Lombard D.B."/>
            <person name="Zhao Y."/>
        </authorList>
    </citation>
    <scope>ACETYLATION [LARGE SCALE ANALYSIS] AT LYS-105</scope>
    <scope>IDENTIFICATION BY MASS SPECTROMETRY [LARGE SCALE ANALYSIS]</scope>
    <source>
        <tissue>Embryonic fibroblast</tissue>
    </source>
</reference>
<proteinExistence type="evidence at protein level"/>
<sequence length="744" mass="82613">MAGRTMQAARCPTDELSLSNCAVVNEKDFQSGQHVMVRTSPNHKYIFTLRTHPSVVPGCIAFSLPQRKWAGLSIGQDIEVALYSFDKAKQCIGTMTIEIDFLQKKNIDSNPYDTDKMAAEFIQQFNNQAFSVGQQLVFSFNDKLFGLLVKDIEAMDPSILKGEPASGKRQKIEVGLVVGNSQVAFEKAENSSLNLIGKAKTKENRQSIINPDWNFEKMGIGGLDKEFSDIFRRAFASRVFPPEIVEQMGCKHVKGILLYGPPGCGKTLLARQIGKMLNAREPKVVNGPEILNKYVGESEANIRKLFADAEEEQRRLGANSGLHIIIFDEIDAICKQRGSMAGSTGVHDTVVNQLLSKIDGVEQLNNILVIGMTNRPDLIDEALLRPGRLEVKMEIGLPDEKGRLQILHIHTARMRGHQLLSADVDIKELAVETKNFSGAELEGLVRAAQSTAMNRHIKASTKVEVDMEKAESLQVTRGDFLASLENDIKPAFGTNQEDYASYIMNGIIKWGDPVTRVLDDGELLVQQTKNSDRTPLVSVLLEGPPHSGKTALAAKIAEESNFPFIKICSPDKMIGFSETAKCQAMKKIFDDAYKSQLSCVVVDDIERLLDYVPIGPRFSNLVLQALLVLLKKAPPQGRKLLIIGTTSRKDVLQEMEMLNAFSTTIHVPNIATGEQLLEALELLGNFKDKERTTIAQQVKGKKVWIGIKKLLMLIEMSLQMDPEYRVRKFLALMREEGASPLDFD</sequence>
<evidence type="ECO:0000250" key="1"/>
<evidence type="ECO:0000250" key="2">
    <source>
        <dbReference type="UniProtKB" id="P18708"/>
    </source>
</evidence>
<evidence type="ECO:0000269" key="3">
    <source>
    </source>
</evidence>
<evidence type="ECO:0000269" key="4">
    <source>
    </source>
</evidence>
<evidence type="ECO:0000305" key="5"/>
<evidence type="ECO:0007744" key="6">
    <source>
    </source>
</evidence>
<evidence type="ECO:0007744" key="7">
    <source>
    </source>
</evidence>
<evidence type="ECO:0007744" key="8">
    <source>
    </source>
</evidence>
<accession>P46460</accession>
<accession>A2A646</accession>
<accession>Q8BQ65</accession>
<accession>Q8C3R2</accession>
<accession>Q8CCT9</accession>
<accession>Q8CEF0</accession>
<accession>Q923C6</accession>